<comment type="function">
    <text evidence="1">Excises uracil residues from the DNA which can arise as a result of misincorporation of dUMP residues by DNA polymerase or due to deamination of cytosine.</text>
</comment>
<comment type="catalytic activity">
    <reaction evidence="1">
        <text>Hydrolyzes single-stranded DNA or mismatched double-stranded DNA and polynucleotides, releasing free uracil.</text>
        <dbReference type="EC" id="3.2.2.27"/>
    </reaction>
</comment>
<comment type="subcellular location">
    <subcellularLocation>
        <location evidence="1">Cytoplasm</location>
    </subcellularLocation>
</comment>
<comment type="similarity">
    <text evidence="1">Belongs to the uracil-DNA glycosylase (UDG) superfamily. UNG family.</text>
</comment>
<dbReference type="EC" id="3.2.2.27" evidence="1"/>
<dbReference type="EMBL" id="CP000721">
    <property type="protein sequence ID" value="ABR36997.1"/>
    <property type="molecule type" value="Genomic_DNA"/>
</dbReference>
<dbReference type="RefSeq" id="WP_012061041.1">
    <property type="nucleotide sequence ID" value="NC_009617.1"/>
</dbReference>
<dbReference type="SMR" id="A6M317"/>
<dbReference type="GeneID" id="66347760"/>
<dbReference type="KEGG" id="cbe:Cbei_4891"/>
<dbReference type="eggNOG" id="COG0692">
    <property type="taxonomic scope" value="Bacteria"/>
</dbReference>
<dbReference type="HOGENOM" id="CLU_032162_3_0_9"/>
<dbReference type="Proteomes" id="UP000000565">
    <property type="component" value="Chromosome"/>
</dbReference>
<dbReference type="GO" id="GO:0005737">
    <property type="term" value="C:cytoplasm"/>
    <property type="evidence" value="ECO:0007669"/>
    <property type="project" value="UniProtKB-SubCell"/>
</dbReference>
<dbReference type="GO" id="GO:0004844">
    <property type="term" value="F:uracil DNA N-glycosylase activity"/>
    <property type="evidence" value="ECO:0007669"/>
    <property type="project" value="UniProtKB-UniRule"/>
</dbReference>
<dbReference type="GO" id="GO:0097510">
    <property type="term" value="P:base-excision repair, AP site formation via deaminated base removal"/>
    <property type="evidence" value="ECO:0007669"/>
    <property type="project" value="TreeGrafter"/>
</dbReference>
<dbReference type="CDD" id="cd10027">
    <property type="entry name" value="UDG-F1-like"/>
    <property type="match status" value="1"/>
</dbReference>
<dbReference type="FunFam" id="3.40.470.10:FF:000001">
    <property type="entry name" value="Uracil-DNA glycosylase"/>
    <property type="match status" value="1"/>
</dbReference>
<dbReference type="Gene3D" id="3.40.470.10">
    <property type="entry name" value="Uracil-DNA glycosylase-like domain"/>
    <property type="match status" value="1"/>
</dbReference>
<dbReference type="HAMAP" id="MF_00148">
    <property type="entry name" value="UDG"/>
    <property type="match status" value="1"/>
</dbReference>
<dbReference type="InterPro" id="IPR002043">
    <property type="entry name" value="UDG_fam1"/>
</dbReference>
<dbReference type="InterPro" id="IPR018085">
    <property type="entry name" value="Ura-DNA_Glyclase_AS"/>
</dbReference>
<dbReference type="InterPro" id="IPR005122">
    <property type="entry name" value="Uracil-DNA_glycosylase-like"/>
</dbReference>
<dbReference type="InterPro" id="IPR036895">
    <property type="entry name" value="Uracil-DNA_glycosylase-like_sf"/>
</dbReference>
<dbReference type="NCBIfam" id="NF003588">
    <property type="entry name" value="PRK05254.1-1"/>
    <property type="match status" value="1"/>
</dbReference>
<dbReference type="NCBIfam" id="NF003589">
    <property type="entry name" value="PRK05254.1-2"/>
    <property type="match status" value="1"/>
</dbReference>
<dbReference type="NCBIfam" id="NF003591">
    <property type="entry name" value="PRK05254.1-4"/>
    <property type="match status" value="1"/>
</dbReference>
<dbReference type="NCBIfam" id="NF003592">
    <property type="entry name" value="PRK05254.1-5"/>
    <property type="match status" value="1"/>
</dbReference>
<dbReference type="NCBIfam" id="TIGR00628">
    <property type="entry name" value="ung"/>
    <property type="match status" value="1"/>
</dbReference>
<dbReference type="PANTHER" id="PTHR11264">
    <property type="entry name" value="URACIL-DNA GLYCOSYLASE"/>
    <property type="match status" value="1"/>
</dbReference>
<dbReference type="PANTHER" id="PTHR11264:SF0">
    <property type="entry name" value="URACIL-DNA GLYCOSYLASE"/>
    <property type="match status" value="1"/>
</dbReference>
<dbReference type="Pfam" id="PF03167">
    <property type="entry name" value="UDG"/>
    <property type="match status" value="1"/>
</dbReference>
<dbReference type="SMART" id="SM00986">
    <property type="entry name" value="UDG"/>
    <property type="match status" value="1"/>
</dbReference>
<dbReference type="SMART" id="SM00987">
    <property type="entry name" value="UreE_C"/>
    <property type="match status" value="1"/>
</dbReference>
<dbReference type="SUPFAM" id="SSF52141">
    <property type="entry name" value="Uracil-DNA glycosylase-like"/>
    <property type="match status" value="1"/>
</dbReference>
<dbReference type="PROSITE" id="PS00130">
    <property type="entry name" value="U_DNA_GLYCOSYLASE"/>
    <property type="match status" value="1"/>
</dbReference>
<name>UNG_CLOB8</name>
<evidence type="ECO:0000255" key="1">
    <source>
        <dbReference type="HAMAP-Rule" id="MF_00148"/>
    </source>
</evidence>
<organism>
    <name type="scientific">Clostridium beijerinckii (strain ATCC 51743 / NCIMB 8052)</name>
    <name type="common">Clostridium acetobutylicum</name>
    <dbReference type="NCBI Taxonomy" id="290402"/>
    <lineage>
        <taxon>Bacteria</taxon>
        <taxon>Bacillati</taxon>
        <taxon>Bacillota</taxon>
        <taxon>Clostridia</taxon>
        <taxon>Eubacteriales</taxon>
        <taxon>Clostridiaceae</taxon>
        <taxon>Clostridium</taxon>
    </lineage>
</organism>
<reference key="1">
    <citation type="submission" date="2007-06" db="EMBL/GenBank/DDBJ databases">
        <title>Complete sequence of Clostridium beijerinckii NCIMB 8052.</title>
        <authorList>
            <consortium name="US DOE Joint Genome Institute"/>
            <person name="Copeland A."/>
            <person name="Lucas S."/>
            <person name="Lapidus A."/>
            <person name="Barry K."/>
            <person name="Detter J.C."/>
            <person name="Glavina del Rio T."/>
            <person name="Hammon N."/>
            <person name="Israni S."/>
            <person name="Dalin E."/>
            <person name="Tice H."/>
            <person name="Pitluck S."/>
            <person name="Sims D."/>
            <person name="Brettin T."/>
            <person name="Bruce D."/>
            <person name="Tapia R."/>
            <person name="Brainard J."/>
            <person name="Schmutz J."/>
            <person name="Larimer F."/>
            <person name="Land M."/>
            <person name="Hauser L."/>
            <person name="Kyrpides N."/>
            <person name="Mikhailova N."/>
            <person name="Bennet G."/>
            <person name="Cann I."/>
            <person name="Chen J.-S."/>
            <person name="Contreras A.L."/>
            <person name="Jones D."/>
            <person name="Kashket E."/>
            <person name="Mitchell W."/>
            <person name="Stoddard S."/>
            <person name="Schwarz W."/>
            <person name="Qureshi N."/>
            <person name="Young M."/>
            <person name="Shi Z."/>
            <person name="Ezeji T."/>
            <person name="White B."/>
            <person name="Blaschek H."/>
            <person name="Richardson P."/>
        </authorList>
    </citation>
    <scope>NUCLEOTIDE SEQUENCE [LARGE SCALE GENOMIC DNA]</scope>
    <source>
        <strain>ATCC 51743 / NCIMB 8052</strain>
    </source>
</reference>
<proteinExistence type="inferred from homology"/>
<keyword id="KW-0963">Cytoplasm</keyword>
<keyword id="KW-0227">DNA damage</keyword>
<keyword id="KW-0234">DNA repair</keyword>
<keyword id="KW-0378">Hydrolase</keyword>
<protein>
    <recommendedName>
        <fullName evidence="1">Uracil-DNA glycosylase</fullName>
        <shortName evidence="1">UDG</shortName>
        <ecNumber evidence="1">3.2.2.27</ecNumber>
    </recommendedName>
</protein>
<feature type="chain" id="PRO_1000076669" description="Uracil-DNA glycosylase">
    <location>
        <begin position="1"/>
        <end position="225"/>
    </location>
</feature>
<feature type="active site" description="Proton acceptor" evidence="1">
    <location>
        <position position="65"/>
    </location>
</feature>
<gene>
    <name evidence="1" type="primary">ung</name>
    <name type="ordered locus">Cbei_4891</name>
</gene>
<accession>A6M317</accession>
<sequence>MSDILKNDWKNYLQSEFQKDYYINLRKFLINEYNSKTIYPNMYDLFNALHFTPYNKVKVVILGQDPYHGPGQAHGLSFSVNPGVKTPPSLINIYKELHTDLGCYIPNNGYLRKWADQGVLLLNTVLTVRAGEANSHKNKGWEEFTNEVIKVLNKKETPIVFILWGNNAISKTDFITNPKHLIIKSVHPSPLSASRGFFGSKPFSKTNNFLISTNQEPIDWQIENI</sequence>